<gene>
    <name type="primary">CYP17A1</name>
    <name type="synonym">CYP17</name>
</gene>
<comment type="function">
    <text evidence="2">A cytochrome P450 monooxygenase involved in corticoid and androgen biosynthesis. Catalyzes 17-alpha hydroxylation of C21 steroids, which is common for both pathways. A second oxidative step, required only for androgen synthesis, involves an acyl-carbon cleavage. The 17-alpha hydroxy intermediates, as part of adrenal glucocorticoids biosynthesis pathway, are precursors of cortisol. Hydroxylates steroid hormones, pregnenolone and progesterone to form 17-alpha hydroxy metabolites, followed by the cleavage of the C17-C20 bond to form C19 steroids, dehydroepiandrosterone (DHEA) and androstenedione. Has 16-alpha hydroxylase activity. Catalyzes 16-alpha hydroxylation of 17-alpha hydroxy pregnenolone, followed by the cleavage of the C17-C20 bond to form 16-alpha-hydroxy DHEA. Also 16-alpha hydroxylates androgens, relevant for estriol synthesis. Mechanistically, uses molecular oxygen inserting one oxygen atom into a substrate, and reducing the second into a water molecule, with two electrons provided by NADPH via cytochrome P450 reductase (CPR; NADPH-ferrihemoprotein reductase).</text>
</comment>
<comment type="catalytic activity">
    <reaction evidence="2">
        <text>a C21-steroid + reduced [NADPH--hemoprotein reductase] + O2 = a 17alpha-hydroxy-C21-steroid + oxidized [NADPH--hemoprotein reductase] + H2O + H(+)</text>
        <dbReference type="Rhea" id="RHEA:65760"/>
        <dbReference type="Rhea" id="RHEA-COMP:11964"/>
        <dbReference type="Rhea" id="RHEA-COMP:11965"/>
        <dbReference type="ChEBI" id="CHEBI:15377"/>
        <dbReference type="ChEBI" id="CHEBI:15378"/>
        <dbReference type="ChEBI" id="CHEBI:15379"/>
        <dbReference type="ChEBI" id="CHEBI:57618"/>
        <dbReference type="ChEBI" id="CHEBI:58210"/>
        <dbReference type="ChEBI" id="CHEBI:61313"/>
        <dbReference type="ChEBI" id="CHEBI:138141"/>
        <dbReference type="EC" id="1.14.14.19"/>
    </reaction>
    <physiologicalReaction direction="left-to-right" evidence="2">
        <dbReference type="Rhea" id="RHEA:65761"/>
    </physiologicalReaction>
</comment>
<comment type="catalytic activity">
    <reaction evidence="2">
        <text>progesterone + reduced [NADPH--hemoprotein reductase] + O2 = 17alpha-hydroxyprogesterone + oxidized [NADPH--hemoprotein reductase] + H2O + H(+)</text>
        <dbReference type="Rhea" id="RHEA:46308"/>
        <dbReference type="Rhea" id="RHEA-COMP:11964"/>
        <dbReference type="Rhea" id="RHEA-COMP:11965"/>
        <dbReference type="ChEBI" id="CHEBI:15377"/>
        <dbReference type="ChEBI" id="CHEBI:15378"/>
        <dbReference type="ChEBI" id="CHEBI:15379"/>
        <dbReference type="ChEBI" id="CHEBI:17026"/>
        <dbReference type="ChEBI" id="CHEBI:17252"/>
        <dbReference type="ChEBI" id="CHEBI:57618"/>
        <dbReference type="ChEBI" id="CHEBI:58210"/>
        <dbReference type="EC" id="1.14.14.19"/>
    </reaction>
    <physiologicalReaction direction="left-to-right" evidence="2">
        <dbReference type="Rhea" id="RHEA:46309"/>
    </physiologicalReaction>
</comment>
<comment type="catalytic activity">
    <reaction evidence="2">
        <text>pregnenolone + reduced [NADPH--hemoprotein reductase] + O2 = 17alpha-hydroxypregnenolone + oxidized [NADPH--hemoprotein reductase] + H2O + H(+)</text>
        <dbReference type="Rhea" id="RHEA:50236"/>
        <dbReference type="Rhea" id="RHEA-COMP:11964"/>
        <dbReference type="Rhea" id="RHEA-COMP:11965"/>
        <dbReference type="ChEBI" id="CHEBI:15377"/>
        <dbReference type="ChEBI" id="CHEBI:15378"/>
        <dbReference type="ChEBI" id="CHEBI:15379"/>
        <dbReference type="ChEBI" id="CHEBI:16581"/>
        <dbReference type="ChEBI" id="CHEBI:28750"/>
        <dbReference type="ChEBI" id="CHEBI:57618"/>
        <dbReference type="ChEBI" id="CHEBI:58210"/>
        <dbReference type="EC" id="1.14.14.19"/>
    </reaction>
    <physiologicalReaction direction="left-to-right" evidence="2">
        <dbReference type="Rhea" id="RHEA:50237"/>
    </physiologicalReaction>
</comment>
<comment type="catalytic activity">
    <reaction evidence="2">
        <text>17alpha-hydroxyprogesterone + reduced [NADPH--hemoprotein reductase] + O2 = androst-4-ene-3,17-dione + acetate + oxidized [NADPH--hemoprotein reductase] + H2O + 2 H(+)</text>
        <dbReference type="Rhea" id="RHEA:14753"/>
        <dbReference type="Rhea" id="RHEA-COMP:11964"/>
        <dbReference type="Rhea" id="RHEA-COMP:11965"/>
        <dbReference type="ChEBI" id="CHEBI:15377"/>
        <dbReference type="ChEBI" id="CHEBI:15378"/>
        <dbReference type="ChEBI" id="CHEBI:15379"/>
        <dbReference type="ChEBI" id="CHEBI:16422"/>
        <dbReference type="ChEBI" id="CHEBI:17252"/>
        <dbReference type="ChEBI" id="CHEBI:30089"/>
        <dbReference type="ChEBI" id="CHEBI:57618"/>
        <dbReference type="ChEBI" id="CHEBI:58210"/>
        <dbReference type="EC" id="1.14.14.32"/>
    </reaction>
    <physiologicalReaction direction="left-to-right" evidence="2">
        <dbReference type="Rhea" id="RHEA:14754"/>
    </physiologicalReaction>
</comment>
<comment type="catalytic activity">
    <reaction evidence="2">
        <text>17alpha-hydroxyprogesterone + reduced [NADPH--hemoprotein reductase] + O2 = 16alpha,17alpha-dihydroxyprogesterone + oxidized [NADPH--hemoprotein reductase] + H2O + H(+)</text>
        <dbReference type="Rhea" id="RHEA:53216"/>
        <dbReference type="Rhea" id="RHEA-COMP:11964"/>
        <dbReference type="Rhea" id="RHEA-COMP:11965"/>
        <dbReference type="ChEBI" id="CHEBI:763"/>
        <dbReference type="ChEBI" id="CHEBI:15377"/>
        <dbReference type="ChEBI" id="CHEBI:15378"/>
        <dbReference type="ChEBI" id="CHEBI:15379"/>
        <dbReference type="ChEBI" id="CHEBI:17252"/>
        <dbReference type="ChEBI" id="CHEBI:57618"/>
        <dbReference type="ChEBI" id="CHEBI:58210"/>
    </reaction>
    <physiologicalReaction direction="left-to-right" evidence="2">
        <dbReference type="Rhea" id="RHEA:53217"/>
    </physiologicalReaction>
</comment>
<comment type="catalytic activity">
    <reaction evidence="2">
        <text>16alpha,17alpha-dihydroxyprogesterone + reduced [NADPH--hemoprotein reductase] + O2 = 6beta,16alpha,17alpha-trihydroxyprogesterone + oxidized [NADPH--hemoprotein reductase] + H2O + H(+)</text>
        <dbReference type="Rhea" id="RHEA:53220"/>
        <dbReference type="Rhea" id="RHEA-COMP:11964"/>
        <dbReference type="Rhea" id="RHEA-COMP:11965"/>
        <dbReference type="ChEBI" id="CHEBI:763"/>
        <dbReference type="ChEBI" id="CHEBI:15377"/>
        <dbReference type="ChEBI" id="CHEBI:15378"/>
        <dbReference type="ChEBI" id="CHEBI:15379"/>
        <dbReference type="ChEBI" id="CHEBI:57618"/>
        <dbReference type="ChEBI" id="CHEBI:58210"/>
        <dbReference type="ChEBI" id="CHEBI:137046"/>
    </reaction>
    <physiologicalReaction direction="left-to-right" evidence="2">
        <dbReference type="Rhea" id="RHEA:53221"/>
    </physiologicalReaction>
</comment>
<comment type="catalytic activity">
    <reaction evidence="2">
        <text>17alpha-hydroxypregnenolone + reduced [NADPH--hemoprotein reductase] + O2 = 3beta-hydroxyandrost-5-en-17-one + acetate + oxidized [NADPH--hemoprotein reductase] + H2O + 2 H(+)</text>
        <dbReference type="Rhea" id="RHEA:50244"/>
        <dbReference type="Rhea" id="RHEA-COMP:11964"/>
        <dbReference type="Rhea" id="RHEA-COMP:11965"/>
        <dbReference type="ChEBI" id="CHEBI:15377"/>
        <dbReference type="ChEBI" id="CHEBI:15378"/>
        <dbReference type="ChEBI" id="CHEBI:15379"/>
        <dbReference type="ChEBI" id="CHEBI:28689"/>
        <dbReference type="ChEBI" id="CHEBI:28750"/>
        <dbReference type="ChEBI" id="CHEBI:30089"/>
        <dbReference type="ChEBI" id="CHEBI:57618"/>
        <dbReference type="ChEBI" id="CHEBI:58210"/>
        <dbReference type="EC" id="1.14.14.32"/>
    </reaction>
    <physiologicalReaction direction="left-to-right" evidence="2">
        <dbReference type="Rhea" id="RHEA:50245"/>
    </physiologicalReaction>
</comment>
<comment type="catalytic activity">
    <reaction evidence="2">
        <text>16alpha,17alpha-dihydroxypregnenolone + reduced [NADPH--hemoprotein reductase] + O2 = 3beta,16alpha-dihydroxy-androst-5-en-17-one + acetate + oxidized [NADPH--hemoprotein reductase] + H2O + 2 H(+)</text>
        <dbReference type="Rhea" id="RHEA:53224"/>
        <dbReference type="Rhea" id="RHEA-COMP:11964"/>
        <dbReference type="Rhea" id="RHEA-COMP:11965"/>
        <dbReference type="ChEBI" id="CHEBI:15377"/>
        <dbReference type="ChEBI" id="CHEBI:15378"/>
        <dbReference type="ChEBI" id="CHEBI:15379"/>
        <dbReference type="ChEBI" id="CHEBI:27771"/>
        <dbReference type="ChEBI" id="CHEBI:30089"/>
        <dbReference type="ChEBI" id="CHEBI:57618"/>
        <dbReference type="ChEBI" id="CHEBI:58210"/>
        <dbReference type="ChEBI" id="CHEBI:137049"/>
    </reaction>
    <physiologicalReaction direction="left-to-right" evidence="2">
        <dbReference type="Rhea" id="RHEA:53225"/>
    </physiologicalReaction>
</comment>
<comment type="catalytic activity">
    <reaction evidence="2">
        <text>3beta-hydroxyandrost-5-en-17-one + reduced [NADPH--hemoprotein reductase] + O2 = 3beta,16alpha-dihydroxy-androst-5-en-17-one + oxidized [NADPH--hemoprotein reductase] + H2O + H(+)</text>
        <dbReference type="Rhea" id="RHEA:47220"/>
        <dbReference type="Rhea" id="RHEA-COMP:11964"/>
        <dbReference type="Rhea" id="RHEA-COMP:11965"/>
        <dbReference type="ChEBI" id="CHEBI:15377"/>
        <dbReference type="ChEBI" id="CHEBI:15378"/>
        <dbReference type="ChEBI" id="CHEBI:15379"/>
        <dbReference type="ChEBI" id="CHEBI:27771"/>
        <dbReference type="ChEBI" id="CHEBI:28689"/>
        <dbReference type="ChEBI" id="CHEBI:57618"/>
        <dbReference type="ChEBI" id="CHEBI:58210"/>
    </reaction>
    <physiologicalReaction direction="left-to-right" evidence="2">
        <dbReference type="Rhea" id="RHEA:47221"/>
    </physiologicalReaction>
</comment>
<comment type="catalytic activity">
    <reaction evidence="2">
        <text>androst-4-ene-3,17-dione + reduced [NADPH--hemoprotein reductase] + O2 = 16alpha-hydroxyandrost-4-ene-3,17-dione + oxidized [NADPH--hemoprotein reductase] + H2O + H(+)</text>
        <dbReference type="Rhea" id="RHEA:53228"/>
        <dbReference type="Rhea" id="RHEA-COMP:11964"/>
        <dbReference type="Rhea" id="RHEA-COMP:11965"/>
        <dbReference type="ChEBI" id="CHEBI:15377"/>
        <dbReference type="ChEBI" id="CHEBI:15378"/>
        <dbReference type="ChEBI" id="CHEBI:15379"/>
        <dbReference type="ChEBI" id="CHEBI:16422"/>
        <dbReference type="ChEBI" id="CHEBI:27582"/>
        <dbReference type="ChEBI" id="CHEBI:57618"/>
        <dbReference type="ChEBI" id="CHEBI:58210"/>
    </reaction>
    <physiologicalReaction direction="left-to-right" evidence="2">
        <dbReference type="Rhea" id="RHEA:53229"/>
    </physiologicalReaction>
</comment>
<comment type="cofactor">
    <cofactor evidence="2">
        <name>heme</name>
        <dbReference type="ChEBI" id="CHEBI:30413"/>
    </cofactor>
</comment>
<comment type="activity regulation">
    <text evidence="2">Regulated predominantly by intracellular cAMP levels. The 17,20-lyase activity is stimulated by cytochrome b5, which acts as an allosteric effector increasing the Vmax of the lyase activity.</text>
</comment>
<comment type="pathway">
    <text evidence="2">Steroid hormone biosynthesis.</text>
</comment>
<comment type="pathway">
    <text evidence="2">Steroid biosynthesis; glucocorticoid biosynthesis.</text>
</comment>
<comment type="subcellular location">
    <subcellularLocation>
        <location evidence="2">Endoplasmic reticulum membrane</location>
    </subcellularLocation>
    <subcellularLocation>
        <location evidence="2">Microsome membrane</location>
    </subcellularLocation>
</comment>
<comment type="similarity">
    <text evidence="3">Belongs to the cytochrome P450 family.</text>
</comment>
<name>CP17A_HORSE</name>
<accession>Q95328</accession>
<accession>Q29483</accession>
<proteinExistence type="evidence at transcript level"/>
<keyword id="KW-0256">Endoplasmic reticulum</keyword>
<keyword id="KW-0349">Heme</keyword>
<keyword id="KW-0408">Iron</keyword>
<keyword id="KW-0443">Lipid metabolism</keyword>
<keyword id="KW-0456">Lyase</keyword>
<keyword id="KW-0472">Membrane</keyword>
<keyword id="KW-0479">Metal-binding</keyword>
<keyword id="KW-0492">Microsome</keyword>
<keyword id="KW-0503">Monooxygenase</keyword>
<keyword id="KW-0560">Oxidoreductase</keyword>
<keyword id="KW-1185">Reference proteome</keyword>
<keyword id="KW-0755">Steroidogenesis</keyword>
<feature type="chain" id="PRO_0000051930" description="Steroid 17-alpha-hydroxylase/17,20 lyase">
    <location>
        <begin position="1"/>
        <end position="508"/>
    </location>
</feature>
<feature type="binding site" description="axial binding residue" evidence="1">
    <location>
        <position position="442"/>
    </location>
    <ligand>
        <name>heme</name>
        <dbReference type="ChEBI" id="CHEBI:30413"/>
    </ligand>
    <ligandPart>
        <name>Fe</name>
        <dbReference type="ChEBI" id="CHEBI:18248"/>
    </ligandPart>
</feature>
<feature type="sequence conflict" description="In Ref. 1; BAA06350." evidence="3" ref="1">
    <original>D</original>
    <variation>E</variation>
    <location>
        <position position="388"/>
    </location>
</feature>
<protein>
    <recommendedName>
        <fullName>Steroid 17-alpha-hydroxylase/17,20 lyase</fullName>
        <ecNumber evidence="2">1.14.14.19</ecNumber>
    </recommendedName>
    <alternativeName>
        <fullName>17-alpha-hydroxyprogesterone aldolase</fullName>
        <ecNumber evidence="2">1.14.14.32</ecNumber>
    </alternativeName>
    <alternativeName>
        <fullName>CYPXVII</fullName>
    </alternativeName>
    <alternativeName>
        <fullName>Cytochrome P450 17A1</fullName>
    </alternativeName>
    <alternativeName>
        <fullName>Cytochrome P450-C17</fullName>
        <shortName>Cytochrome P450c17</shortName>
    </alternativeName>
    <alternativeName>
        <fullName>Steroid 17-alpha-monooxygenase</fullName>
    </alternativeName>
</protein>
<sequence>MWELLAFLLLAIAYFFRPKVKCPGAKYPKSLPYLPLVGSLPFLPRHGHPHVNFFKLQKKYGPIYSLRMGTKTTVMVGHYQLAKEVLIKKGKEFSGRPQVATLNILSDNQKGVAFADHGAPWQLHRKLVRAAFALFKDGNQKLEKIICHETSLLCDLLATQNGQTIDLSSPLFLAVTNVICWICFNSSYMKGDPALETMQNYHKGILETLEKDNVVDIFPALKIFPNKSLEKMRHCVNIRNELLSKIFEKHKENFNSDSITSMLDLLIQAKKNSDNNNTGPDQDSKLLSDKHILATIGDIFGAGVETTTSVVKWIVAFLLHDPQLKKKIQEEIDQNVGFSRTPTLSDRNRLLLLEATIREVLRIRPVAPMLIPHKALVDSSIGEFAVDDGTNVIINLWALHHNEKEWHQPDRFMPERFLDPTGSQLISPSLSYLPFGAGPRSCIGELLARQELFLFTAWLLQRFNLEVPDDGQLPSLEGHPTAVFLIDSFKVKINVRQAWREAQAEGST</sequence>
<reference key="1">
    <citation type="book" date="1995" name="Biology of Reproduction Monograph Series 1: Equine Reproduction">
        <title>Molecular cloning and nucleotide sequence of equine testicular cytochrome P-450 steroid 17alpha-hydroxylase/C17,20-lyase messenger ribonucleic acid.</title>
        <editorList>
            <person name="Sharp D.C."/>
            <person name="Bazer F.W."/>
        </editorList>
        <authorList>
            <person name="Hasegawa T."/>
            <person name="Mukoyama H."/>
            <person name="Yoshida S."/>
            <person name="Takahashi M."/>
        </authorList>
    </citation>
    <scope>NUCLEOTIDE SEQUENCE</scope>
    <source>
        <tissue>Testis</tissue>
    </source>
</reference>
<reference key="2">
    <citation type="submission" date="1996-10" db="EMBL/GenBank/DDBJ databases">
        <title>Exon/intron structure of equine P450c17.</title>
        <authorList>
            <person name="Hasegawa T."/>
        </authorList>
    </citation>
    <scope>NUCLEOTIDE SEQUENCE</scope>
    <source>
        <strain>Thoroughbred</strain>
        <tissue>Leukocyte</tissue>
    </source>
</reference>
<organism>
    <name type="scientific">Equus caballus</name>
    <name type="common">Horse</name>
    <dbReference type="NCBI Taxonomy" id="9796"/>
    <lineage>
        <taxon>Eukaryota</taxon>
        <taxon>Metazoa</taxon>
        <taxon>Chordata</taxon>
        <taxon>Craniata</taxon>
        <taxon>Vertebrata</taxon>
        <taxon>Euteleostomi</taxon>
        <taxon>Mammalia</taxon>
        <taxon>Eutheria</taxon>
        <taxon>Laurasiatheria</taxon>
        <taxon>Perissodactyla</taxon>
        <taxon>Equidae</taxon>
        <taxon>Equus</taxon>
    </lineage>
</organism>
<evidence type="ECO:0000250" key="1"/>
<evidence type="ECO:0000250" key="2">
    <source>
        <dbReference type="UniProtKB" id="P05093"/>
    </source>
</evidence>
<evidence type="ECO:0000305" key="3"/>
<dbReference type="EC" id="1.14.14.19" evidence="2"/>
<dbReference type="EC" id="1.14.14.32" evidence="2"/>
<dbReference type="EMBL" id="D30688">
    <property type="protein sequence ID" value="BAA06350.1"/>
    <property type="molecule type" value="mRNA"/>
</dbReference>
<dbReference type="EMBL" id="D88184">
    <property type="protein sequence ID" value="BAA13551.1"/>
    <property type="molecule type" value="Genomic_DNA"/>
</dbReference>
<dbReference type="RefSeq" id="NP_001075992.1">
    <property type="nucleotide sequence ID" value="NM_001082523.1"/>
</dbReference>
<dbReference type="SMR" id="Q95328"/>
<dbReference type="FunCoup" id="Q95328">
    <property type="interactions" value="118"/>
</dbReference>
<dbReference type="STRING" id="9796.ENSECAP00000008577"/>
<dbReference type="PaxDb" id="9796-ENSECAP00000008577"/>
<dbReference type="GeneID" id="100034232"/>
<dbReference type="KEGG" id="ecb:100034232"/>
<dbReference type="CTD" id="1586"/>
<dbReference type="HOGENOM" id="CLU_001570_22_0_1"/>
<dbReference type="InParanoid" id="Q95328"/>
<dbReference type="OrthoDB" id="1470350at2759"/>
<dbReference type="TreeFam" id="TF105095"/>
<dbReference type="UniPathway" id="UPA00788"/>
<dbReference type="Proteomes" id="UP000002281">
    <property type="component" value="Unplaced"/>
</dbReference>
<dbReference type="GO" id="GO:0005789">
    <property type="term" value="C:endoplasmic reticulum membrane"/>
    <property type="evidence" value="ECO:0007669"/>
    <property type="project" value="UniProtKB-SubCell"/>
</dbReference>
<dbReference type="GO" id="GO:0020037">
    <property type="term" value="F:heme binding"/>
    <property type="evidence" value="ECO:0000250"/>
    <property type="project" value="UniProtKB"/>
</dbReference>
<dbReference type="GO" id="GO:0005506">
    <property type="term" value="F:iron ion binding"/>
    <property type="evidence" value="ECO:0007669"/>
    <property type="project" value="InterPro"/>
</dbReference>
<dbReference type="GO" id="GO:0016829">
    <property type="term" value="F:lyase activity"/>
    <property type="evidence" value="ECO:0007669"/>
    <property type="project" value="UniProtKB-KW"/>
</dbReference>
<dbReference type="GO" id="GO:0004508">
    <property type="term" value="F:steroid 17-alpha-monooxygenase activity"/>
    <property type="evidence" value="ECO:0000250"/>
    <property type="project" value="UniProtKB"/>
</dbReference>
<dbReference type="GO" id="GO:0006704">
    <property type="term" value="P:glucocorticoid biosynthetic process"/>
    <property type="evidence" value="ECO:0007669"/>
    <property type="project" value="UniProtKB-UniPathway"/>
</dbReference>
<dbReference type="GO" id="GO:0042446">
    <property type="term" value="P:hormone biosynthetic process"/>
    <property type="evidence" value="ECO:0000250"/>
    <property type="project" value="UniProtKB"/>
</dbReference>
<dbReference type="GO" id="GO:0042448">
    <property type="term" value="P:progesterone metabolic process"/>
    <property type="evidence" value="ECO:0000250"/>
    <property type="project" value="UniProtKB"/>
</dbReference>
<dbReference type="GO" id="GO:0008202">
    <property type="term" value="P:steroid metabolic process"/>
    <property type="evidence" value="ECO:0000250"/>
    <property type="project" value="UniProtKB"/>
</dbReference>
<dbReference type="CDD" id="cd20673">
    <property type="entry name" value="CYP17A1"/>
    <property type="match status" value="1"/>
</dbReference>
<dbReference type="FunFam" id="1.10.630.10:FF:000002">
    <property type="entry name" value="Cytochrome P450 1A1"/>
    <property type="match status" value="1"/>
</dbReference>
<dbReference type="Gene3D" id="1.10.630.10">
    <property type="entry name" value="Cytochrome P450"/>
    <property type="match status" value="1"/>
</dbReference>
<dbReference type="InterPro" id="IPR001128">
    <property type="entry name" value="Cyt_P450"/>
</dbReference>
<dbReference type="InterPro" id="IPR017972">
    <property type="entry name" value="Cyt_P450_CS"/>
</dbReference>
<dbReference type="InterPro" id="IPR002401">
    <property type="entry name" value="Cyt_P450_E_grp-I"/>
</dbReference>
<dbReference type="InterPro" id="IPR036396">
    <property type="entry name" value="Cyt_P450_sf"/>
</dbReference>
<dbReference type="PANTHER" id="PTHR24289">
    <property type="entry name" value="STEROID 17-ALPHA-HYDROXYLASE/17,20 LYASE"/>
    <property type="match status" value="1"/>
</dbReference>
<dbReference type="PANTHER" id="PTHR24289:SF13">
    <property type="entry name" value="STEROID 17-ALPHA-HYDROXYLASE_17,20 LYASE"/>
    <property type="match status" value="1"/>
</dbReference>
<dbReference type="Pfam" id="PF00067">
    <property type="entry name" value="p450"/>
    <property type="match status" value="1"/>
</dbReference>
<dbReference type="PRINTS" id="PR00463">
    <property type="entry name" value="EP450I"/>
</dbReference>
<dbReference type="PRINTS" id="PR00385">
    <property type="entry name" value="P450"/>
</dbReference>
<dbReference type="SUPFAM" id="SSF48264">
    <property type="entry name" value="Cytochrome P450"/>
    <property type="match status" value="1"/>
</dbReference>
<dbReference type="PROSITE" id="PS00086">
    <property type="entry name" value="CYTOCHROME_P450"/>
    <property type="match status" value="1"/>
</dbReference>